<sequence>MKNKNSKQNTHSTIGEQDIHYFHEGKHIYAYEFMGAHKACEGGIEGIRFTTWAPNAKSICVIGDFNYWQVEDKNYMEPITDAGLWSVFIPNAKNGDKYKFVVTNKDTNHYVYKSDPYAFFSELRPNTASIITTETQYTWSDDKWLEKRAKTNYYDNPMNVYELHLASWKTKDGKFMTYDELSETLPQYIKEMGYTHVEFMPLHEHPLDASWGYQPTGFYSVNSRHGDIIGLKRLVDKLHNNDIGVILDWVPGHFCKDQHGLIYFDGTPCYEYQEHTKAINKGWGTHNFDLGRNEVKCFLISNAMYWINEFHIDGLRVDAVSNILYLNYDREDGQWIPNIYGGHENLEGIAFLKELNGVLKHTCKGVVTIAEESSSWPDISTPVEKGGLGFDFKWNMGWMNDTLRYISLDPVYRKYHHNLITFSMVYHYSEKFILSISHDEVVHGKKSLINKMWGDLWNKYAGLRLYMSYMIGHPGKKLIFMGSEFGQFVEWREYEQLQWQVVDQYESHKQTLHFFKKLNDFYHNETALWQCDYDHHGFRWIDADNSQQSILSFIRSSKDNKQKLIFICNFTPVTYYDYHLGVPDAGSYKEVFNSDNLEFGGSGQVMATEIFSSPQSSHGFEQRITIKIPPMATLVLKLIK</sequence>
<gene>
    <name evidence="1" type="primary">glgB</name>
    <name type="ordered locus">FTN_0513</name>
</gene>
<dbReference type="EC" id="2.4.1.18" evidence="1"/>
<dbReference type="EMBL" id="CP000439">
    <property type="protein sequence ID" value="ABK89408.1"/>
    <property type="molecule type" value="Genomic_DNA"/>
</dbReference>
<dbReference type="RefSeq" id="WP_003038522.1">
    <property type="nucleotide sequence ID" value="NC_008601.1"/>
</dbReference>
<dbReference type="SMR" id="A0Q593"/>
<dbReference type="CAZy" id="CBM48">
    <property type="family name" value="Carbohydrate-Binding Module Family 48"/>
</dbReference>
<dbReference type="CAZy" id="GH13">
    <property type="family name" value="Glycoside Hydrolase Family 13"/>
</dbReference>
<dbReference type="KEGG" id="ftn:FTN_0513"/>
<dbReference type="KEGG" id="ftx:AW25_1516"/>
<dbReference type="BioCyc" id="FTUL401614:G1G75-535-MONOMER"/>
<dbReference type="UniPathway" id="UPA00164"/>
<dbReference type="Proteomes" id="UP000000762">
    <property type="component" value="Chromosome"/>
</dbReference>
<dbReference type="GO" id="GO:0005829">
    <property type="term" value="C:cytosol"/>
    <property type="evidence" value="ECO:0007669"/>
    <property type="project" value="TreeGrafter"/>
</dbReference>
<dbReference type="GO" id="GO:0003844">
    <property type="term" value="F:1,4-alpha-glucan branching enzyme activity"/>
    <property type="evidence" value="ECO:0007669"/>
    <property type="project" value="UniProtKB-UniRule"/>
</dbReference>
<dbReference type="GO" id="GO:0043169">
    <property type="term" value="F:cation binding"/>
    <property type="evidence" value="ECO:0007669"/>
    <property type="project" value="InterPro"/>
</dbReference>
<dbReference type="GO" id="GO:0004553">
    <property type="term" value="F:hydrolase activity, hydrolyzing O-glycosyl compounds"/>
    <property type="evidence" value="ECO:0007669"/>
    <property type="project" value="InterPro"/>
</dbReference>
<dbReference type="GO" id="GO:0005978">
    <property type="term" value="P:glycogen biosynthetic process"/>
    <property type="evidence" value="ECO:0007669"/>
    <property type="project" value="UniProtKB-UniRule"/>
</dbReference>
<dbReference type="CDD" id="cd11322">
    <property type="entry name" value="AmyAc_Glg_BE"/>
    <property type="match status" value="1"/>
</dbReference>
<dbReference type="CDD" id="cd02855">
    <property type="entry name" value="E_set_GBE_prok_N"/>
    <property type="match status" value="1"/>
</dbReference>
<dbReference type="FunFam" id="2.60.40.1180:FF:000002">
    <property type="entry name" value="1,4-alpha-glucan branching enzyme GlgB"/>
    <property type="match status" value="1"/>
</dbReference>
<dbReference type="FunFam" id="3.20.20.80:FF:000003">
    <property type="entry name" value="1,4-alpha-glucan branching enzyme GlgB"/>
    <property type="match status" value="1"/>
</dbReference>
<dbReference type="Gene3D" id="3.20.20.80">
    <property type="entry name" value="Glycosidases"/>
    <property type="match status" value="1"/>
</dbReference>
<dbReference type="Gene3D" id="2.60.40.1180">
    <property type="entry name" value="Golgi alpha-mannosidase II"/>
    <property type="match status" value="1"/>
</dbReference>
<dbReference type="Gene3D" id="2.60.40.10">
    <property type="entry name" value="Immunoglobulins"/>
    <property type="match status" value="1"/>
</dbReference>
<dbReference type="HAMAP" id="MF_00685">
    <property type="entry name" value="GlgB"/>
    <property type="match status" value="1"/>
</dbReference>
<dbReference type="InterPro" id="IPR006048">
    <property type="entry name" value="A-amylase/branching_C"/>
</dbReference>
<dbReference type="InterPro" id="IPR037439">
    <property type="entry name" value="Branching_enzy"/>
</dbReference>
<dbReference type="InterPro" id="IPR006407">
    <property type="entry name" value="GlgB"/>
</dbReference>
<dbReference type="InterPro" id="IPR044143">
    <property type="entry name" value="GlgB_N_E_set_prok"/>
</dbReference>
<dbReference type="InterPro" id="IPR006047">
    <property type="entry name" value="Glyco_hydro_13_cat_dom"/>
</dbReference>
<dbReference type="InterPro" id="IPR004193">
    <property type="entry name" value="Glyco_hydro_13_N"/>
</dbReference>
<dbReference type="InterPro" id="IPR013780">
    <property type="entry name" value="Glyco_hydro_b"/>
</dbReference>
<dbReference type="InterPro" id="IPR017853">
    <property type="entry name" value="Glycoside_hydrolase_SF"/>
</dbReference>
<dbReference type="InterPro" id="IPR013783">
    <property type="entry name" value="Ig-like_fold"/>
</dbReference>
<dbReference type="InterPro" id="IPR014756">
    <property type="entry name" value="Ig_E-set"/>
</dbReference>
<dbReference type="NCBIfam" id="TIGR01515">
    <property type="entry name" value="branching_enzym"/>
    <property type="match status" value="1"/>
</dbReference>
<dbReference type="NCBIfam" id="NF003811">
    <property type="entry name" value="PRK05402.1"/>
    <property type="match status" value="1"/>
</dbReference>
<dbReference type="NCBIfam" id="NF008967">
    <property type="entry name" value="PRK12313.1"/>
    <property type="match status" value="1"/>
</dbReference>
<dbReference type="PANTHER" id="PTHR43651">
    <property type="entry name" value="1,4-ALPHA-GLUCAN-BRANCHING ENZYME"/>
    <property type="match status" value="1"/>
</dbReference>
<dbReference type="PANTHER" id="PTHR43651:SF3">
    <property type="entry name" value="1,4-ALPHA-GLUCAN-BRANCHING ENZYME"/>
    <property type="match status" value="1"/>
</dbReference>
<dbReference type="Pfam" id="PF00128">
    <property type="entry name" value="Alpha-amylase"/>
    <property type="match status" value="2"/>
</dbReference>
<dbReference type="Pfam" id="PF02806">
    <property type="entry name" value="Alpha-amylase_C"/>
    <property type="match status" value="1"/>
</dbReference>
<dbReference type="Pfam" id="PF02922">
    <property type="entry name" value="CBM_48"/>
    <property type="match status" value="1"/>
</dbReference>
<dbReference type="PIRSF" id="PIRSF000463">
    <property type="entry name" value="GlgB"/>
    <property type="match status" value="1"/>
</dbReference>
<dbReference type="SMART" id="SM00642">
    <property type="entry name" value="Aamy"/>
    <property type="match status" value="1"/>
</dbReference>
<dbReference type="SUPFAM" id="SSF51445">
    <property type="entry name" value="(Trans)glycosidases"/>
    <property type="match status" value="1"/>
</dbReference>
<dbReference type="SUPFAM" id="SSF81296">
    <property type="entry name" value="E set domains"/>
    <property type="match status" value="1"/>
</dbReference>
<dbReference type="SUPFAM" id="SSF51011">
    <property type="entry name" value="Glycosyl hydrolase domain"/>
    <property type="match status" value="1"/>
</dbReference>
<name>GLGB_FRATN</name>
<comment type="function">
    <text evidence="1">Catalyzes the formation of the alpha-1,6-glucosidic linkages in glycogen by scission of a 1,4-alpha-linked oligosaccharide from growing alpha-1,4-glucan chains and the subsequent attachment of the oligosaccharide to the alpha-1,6 position.</text>
</comment>
<comment type="catalytic activity">
    <reaction evidence="1">
        <text>Transfers a segment of a (1-&gt;4)-alpha-D-glucan chain to a primary hydroxy group in a similar glucan chain.</text>
        <dbReference type="EC" id="2.4.1.18"/>
    </reaction>
</comment>
<comment type="pathway">
    <text evidence="1">Glycan biosynthesis; glycogen biosynthesis.</text>
</comment>
<comment type="subunit">
    <text evidence="1">Monomer.</text>
</comment>
<comment type="similarity">
    <text evidence="1">Belongs to the glycosyl hydrolase 13 family. GlgB subfamily.</text>
</comment>
<feature type="chain" id="PRO_1000044978" description="1,4-alpha-glucan branching enzyme GlgB">
    <location>
        <begin position="1"/>
        <end position="640"/>
    </location>
</feature>
<feature type="active site" description="Nucleophile" evidence="1">
    <location>
        <position position="318"/>
    </location>
</feature>
<feature type="active site" description="Proton donor" evidence="1">
    <location>
        <position position="371"/>
    </location>
</feature>
<accession>A0Q593</accession>
<reference key="1">
    <citation type="journal article" date="2007" name="Genome Biol.">
        <title>Comparison of Francisella tularensis genomes reveals evolutionary events associated with the emergence of human pathogenic strains.</title>
        <authorList>
            <person name="Rohmer L."/>
            <person name="Fong C."/>
            <person name="Abmayr S."/>
            <person name="Wasnick M."/>
            <person name="Larson Freeman T.J."/>
            <person name="Radey M."/>
            <person name="Guina T."/>
            <person name="Svensson K."/>
            <person name="Hayden H.S."/>
            <person name="Jacobs M."/>
            <person name="Gallagher L.A."/>
            <person name="Manoil C."/>
            <person name="Ernst R.K."/>
            <person name="Drees B."/>
            <person name="Buckley D."/>
            <person name="Haugen E."/>
            <person name="Bovee D."/>
            <person name="Zhou Y."/>
            <person name="Chang J."/>
            <person name="Levy R."/>
            <person name="Lim R."/>
            <person name="Gillett W."/>
            <person name="Guenthener D."/>
            <person name="Kang A."/>
            <person name="Shaffer S.A."/>
            <person name="Taylor G."/>
            <person name="Chen J."/>
            <person name="Gallis B."/>
            <person name="D'Argenio D.A."/>
            <person name="Forsman M."/>
            <person name="Olson M.V."/>
            <person name="Goodlett D.R."/>
            <person name="Kaul R."/>
            <person name="Miller S.I."/>
            <person name="Brittnacher M.J."/>
        </authorList>
    </citation>
    <scope>NUCLEOTIDE SEQUENCE [LARGE SCALE GENOMIC DNA]</scope>
    <source>
        <strain>U112</strain>
    </source>
</reference>
<organism>
    <name type="scientific">Francisella tularensis subsp. novicida (strain U112)</name>
    <dbReference type="NCBI Taxonomy" id="401614"/>
    <lineage>
        <taxon>Bacteria</taxon>
        <taxon>Pseudomonadati</taxon>
        <taxon>Pseudomonadota</taxon>
        <taxon>Gammaproteobacteria</taxon>
        <taxon>Thiotrichales</taxon>
        <taxon>Francisellaceae</taxon>
        <taxon>Francisella</taxon>
    </lineage>
</organism>
<evidence type="ECO:0000255" key="1">
    <source>
        <dbReference type="HAMAP-Rule" id="MF_00685"/>
    </source>
</evidence>
<proteinExistence type="inferred from homology"/>
<keyword id="KW-0119">Carbohydrate metabolism</keyword>
<keyword id="KW-0320">Glycogen biosynthesis</keyword>
<keyword id="KW-0321">Glycogen metabolism</keyword>
<keyword id="KW-0328">Glycosyltransferase</keyword>
<keyword id="KW-0808">Transferase</keyword>
<protein>
    <recommendedName>
        <fullName evidence="1">1,4-alpha-glucan branching enzyme GlgB</fullName>
        <ecNumber evidence="1">2.4.1.18</ecNumber>
    </recommendedName>
    <alternativeName>
        <fullName evidence="1">1,4-alpha-D-glucan:1,4-alpha-D-glucan 6-glucosyl-transferase</fullName>
    </alternativeName>
    <alternativeName>
        <fullName evidence="1">Alpha-(1-&gt;4)-glucan branching enzyme</fullName>
    </alternativeName>
    <alternativeName>
        <fullName evidence="1">Glycogen branching enzyme</fullName>
        <shortName evidence="1">BE</shortName>
    </alternativeName>
</protein>